<dbReference type="EMBL" id="AB220920">
    <property type="protein sequence ID" value="BAE96741.1"/>
    <property type="molecule type" value="mRNA"/>
</dbReference>
<dbReference type="RefSeq" id="NP_001037837.1">
    <property type="nucleotide sequence ID" value="NM_001044372.1"/>
</dbReference>
<dbReference type="SMR" id="Q18PD9"/>
<dbReference type="STRING" id="31033.ENSTRUP00000082537"/>
<dbReference type="GeneID" id="724073"/>
<dbReference type="KEGG" id="tru:724073"/>
<dbReference type="CTD" id="285489"/>
<dbReference type="HOGENOM" id="CLU_024931_0_0_1"/>
<dbReference type="InParanoid" id="Q18PD9"/>
<dbReference type="OrthoDB" id="6537982at2759"/>
<dbReference type="Proteomes" id="UP000005226">
    <property type="component" value="Unplaced"/>
</dbReference>
<dbReference type="GO" id="GO:0005886">
    <property type="term" value="C:plasma membrane"/>
    <property type="evidence" value="ECO:0007669"/>
    <property type="project" value="UniProtKB-SubCell"/>
</dbReference>
<dbReference type="GO" id="GO:0045202">
    <property type="term" value="C:synapse"/>
    <property type="evidence" value="ECO:0007669"/>
    <property type="project" value="UniProtKB-SubCell"/>
</dbReference>
<dbReference type="GO" id="GO:0008289">
    <property type="term" value="F:lipid binding"/>
    <property type="evidence" value="ECO:0007669"/>
    <property type="project" value="UniProtKB-KW"/>
</dbReference>
<dbReference type="GO" id="GO:0019901">
    <property type="term" value="F:protein kinase binding"/>
    <property type="evidence" value="ECO:0007669"/>
    <property type="project" value="InterPro"/>
</dbReference>
<dbReference type="GO" id="GO:0007528">
    <property type="term" value="P:neuromuscular junction development"/>
    <property type="evidence" value="ECO:0007669"/>
    <property type="project" value="TreeGrafter"/>
</dbReference>
<dbReference type="CDD" id="cd14677">
    <property type="entry name" value="PH_DOK7"/>
    <property type="match status" value="1"/>
</dbReference>
<dbReference type="CDD" id="cd13165">
    <property type="entry name" value="PTB_DOK7"/>
    <property type="match status" value="1"/>
</dbReference>
<dbReference type="Gene3D" id="2.30.29.30">
    <property type="entry name" value="Pleckstrin-homology domain (PH domain)/Phosphotyrosine-binding domain (PTB)"/>
    <property type="match status" value="2"/>
</dbReference>
<dbReference type="InterPro" id="IPR037746">
    <property type="entry name" value="Dok-7"/>
</dbReference>
<dbReference type="InterPro" id="IPR037747">
    <property type="entry name" value="Dok-7_PH"/>
</dbReference>
<dbReference type="InterPro" id="IPR037748">
    <property type="entry name" value="Dok-7_PTB"/>
</dbReference>
<dbReference type="InterPro" id="IPR011993">
    <property type="entry name" value="PH-like_dom_sf"/>
</dbReference>
<dbReference type="InterPro" id="IPR001849">
    <property type="entry name" value="PH_domain"/>
</dbReference>
<dbReference type="PANTHER" id="PTHR21636">
    <property type="entry name" value="PROTEIN DOK-7"/>
    <property type="match status" value="1"/>
</dbReference>
<dbReference type="PANTHER" id="PTHR21636:SF2">
    <property type="entry name" value="PROTEIN DOK-7"/>
    <property type="match status" value="1"/>
</dbReference>
<dbReference type="SMART" id="SM01244">
    <property type="entry name" value="IRS"/>
    <property type="match status" value="1"/>
</dbReference>
<dbReference type="SUPFAM" id="SSF50729">
    <property type="entry name" value="PH domain-like"/>
    <property type="match status" value="2"/>
</dbReference>
<dbReference type="PROSITE" id="PS50003">
    <property type="entry name" value="PH_DOMAIN"/>
    <property type="match status" value="1"/>
</dbReference>
<sequence length="502" mass="53658">MTDSVVVEGYARLRDGKKWKTRWLVLRKPSPVADCLLLLVFKDKSDKVQGNKERLSATLEELCGLEVGPWYEGVAFTLAILCLTQTTLLGFDSKEALLAWDARLRYSLGEVHRFSVGVLPGTKLESGPATLHLCNNLLALARDVPPVIVGHWNLPDLRRYGPVPNGFVFEGGTRCGYWAGVFLLASVESEQISFLFDCIVRGISPTRGPFGLRPVLPDPSTSETSSEERLNHETLELEKRLSMLSHRSSTASYCPSAGGDDRSISGSSDTSDTSHSDCSVGSRLTIWTEPTSIQPENLGNAGAKAAAQSAEKPLPSGQGGGSQPPTKPPRQLQEIGRQSSSDSGIATGSHSSYSGSFSSYTGSLDSNTGEDYGSVFSLPPHLGQDVRPCTCLNVPGHEYQIPTSLRYLYDTPRSVLQEVGGDTKDNQPPAALGPTTEPAEGDKRSPGEGHLATADGDSPNEHFRSPSESKKSSEAPSGGHPGSCCFKTIVTICAVCGGFKVS</sequence>
<keyword id="KW-1003">Cell membrane</keyword>
<keyword id="KW-0446">Lipid-binding</keyword>
<keyword id="KW-0472">Membrane</keyword>
<keyword id="KW-1185">Reference proteome</keyword>
<keyword id="KW-0770">Synapse</keyword>
<gene>
    <name type="primary">dok7</name>
</gene>
<comment type="function">
    <text evidence="1">Probable muscle-intrinsic activator of MUSK that plays an essential role in neuromuscular synaptogenesis. Acts in aneural activation of MUSK and subsequent acetylcholine receptor (AchR) clustering in myotubes (By similarity).</text>
</comment>
<comment type="subcellular location">
    <subcellularLocation>
        <location evidence="1">Cell membrane</location>
        <topology evidence="1">Peripheral membrane protein</topology>
    </subcellularLocation>
    <subcellularLocation>
        <location evidence="1">Synapse</location>
    </subcellularLocation>
    <text evidence="1">Accumulates at neuromuscular junctions.</text>
</comment>
<comment type="domain">
    <text evidence="1">The PH domain mediated binding to phospholipids with phosphoinositol headgroups. Affinity is highest for phosphatidyl 3,4,5-trisphosphate, followed by phosphatidylinositol 3,4-bisphosphate and phosphatidylinositol 4,5-bisphosphate (By similarity).</text>
</comment>
<name>DOK7_TAKRU</name>
<feature type="chain" id="PRO_0000250373" description="Protein Dok-7">
    <location>
        <begin position="1"/>
        <end position="502"/>
    </location>
</feature>
<feature type="domain" description="PH" evidence="2">
    <location>
        <begin position="4"/>
        <end position="109"/>
    </location>
</feature>
<feature type="domain" description="IRS-type PTB">
    <location>
        <begin position="105"/>
        <end position="210"/>
    </location>
</feature>
<feature type="region of interest" description="Disordered" evidence="3">
    <location>
        <begin position="210"/>
        <end position="232"/>
    </location>
</feature>
<feature type="region of interest" description="Disordered" evidence="3">
    <location>
        <begin position="249"/>
        <end position="279"/>
    </location>
</feature>
<feature type="region of interest" description="Disordered" evidence="3">
    <location>
        <begin position="291"/>
        <end position="358"/>
    </location>
</feature>
<feature type="region of interest" description="Disordered" evidence="3">
    <location>
        <begin position="418"/>
        <end position="482"/>
    </location>
</feature>
<feature type="compositionally biased region" description="Low complexity" evidence="3">
    <location>
        <begin position="264"/>
        <end position="279"/>
    </location>
</feature>
<feature type="compositionally biased region" description="Low complexity" evidence="3">
    <location>
        <begin position="301"/>
        <end position="316"/>
    </location>
</feature>
<feature type="compositionally biased region" description="Polar residues" evidence="3">
    <location>
        <begin position="336"/>
        <end position="346"/>
    </location>
</feature>
<feature type="compositionally biased region" description="Low complexity" evidence="3">
    <location>
        <begin position="347"/>
        <end position="358"/>
    </location>
</feature>
<feature type="compositionally biased region" description="Basic and acidic residues" evidence="3">
    <location>
        <begin position="459"/>
        <end position="473"/>
    </location>
</feature>
<protein>
    <recommendedName>
        <fullName>Protein Dok-7</fullName>
    </recommendedName>
    <alternativeName>
        <fullName>Downstream of tyrosine kinase 7</fullName>
    </alternativeName>
</protein>
<evidence type="ECO:0000250" key="1"/>
<evidence type="ECO:0000255" key="2">
    <source>
        <dbReference type="PROSITE-ProRule" id="PRU00145"/>
    </source>
</evidence>
<evidence type="ECO:0000256" key="3">
    <source>
        <dbReference type="SAM" id="MobiDB-lite"/>
    </source>
</evidence>
<reference key="1">
    <citation type="journal article" date="2006" name="Science">
        <title>The muscle protein Dok-7 is essential for neuromuscular synaptogenesis.</title>
        <authorList>
            <person name="Okada K."/>
            <person name="Inoue A."/>
            <person name="Okada M."/>
            <person name="Murata Y."/>
            <person name="Kakuta S."/>
            <person name="Jigami T."/>
            <person name="Kubo S."/>
            <person name="Shiraishi H."/>
            <person name="Eguchi K."/>
            <person name="Motomura M."/>
            <person name="Akiyama T."/>
            <person name="Iwakura Y."/>
            <person name="Higuchi O."/>
            <person name="Yamanashi Y."/>
        </authorList>
    </citation>
    <scope>NUCLEOTIDE SEQUENCE [MRNA]</scope>
</reference>
<organism>
    <name type="scientific">Takifugu rubripes</name>
    <name type="common">Japanese pufferfish</name>
    <name type="synonym">Fugu rubripes</name>
    <dbReference type="NCBI Taxonomy" id="31033"/>
    <lineage>
        <taxon>Eukaryota</taxon>
        <taxon>Metazoa</taxon>
        <taxon>Chordata</taxon>
        <taxon>Craniata</taxon>
        <taxon>Vertebrata</taxon>
        <taxon>Euteleostomi</taxon>
        <taxon>Actinopterygii</taxon>
        <taxon>Neopterygii</taxon>
        <taxon>Teleostei</taxon>
        <taxon>Neoteleostei</taxon>
        <taxon>Acanthomorphata</taxon>
        <taxon>Eupercaria</taxon>
        <taxon>Tetraodontiformes</taxon>
        <taxon>Tetradontoidea</taxon>
        <taxon>Tetraodontidae</taxon>
        <taxon>Takifugu</taxon>
    </lineage>
</organism>
<proteinExistence type="evidence at transcript level"/>
<accession>Q18PD9</accession>